<protein>
    <recommendedName>
        <fullName>Probable cytochrome P450 6g2</fullName>
        <ecNumber>1.14.-.-</ecNumber>
    </recommendedName>
    <alternativeName>
        <fullName>CYPVIG2</fullName>
    </alternativeName>
</protein>
<feature type="chain" id="PRO_0000051884" description="Probable cytochrome P450 6g2">
    <location>
        <begin position="1"/>
        <end position="519"/>
    </location>
</feature>
<feature type="binding site" description="axial binding residue" evidence="1">
    <location>
        <position position="460"/>
    </location>
    <ligand>
        <name>heme</name>
        <dbReference type="ChEBI" id="CHEBI:30413"/>
    </ligand>
    <ligandPart>
        <name>Fe</name>
        <dbReference type="ChEBI" id="CHEBI:18248"/>
    </ligandPart>
</feature>
<feature type="sequence conflict" description="In Ref. 1; AAR88134." evidence="2" ref="1">
    <original>R</original>
    <variation>H</variation>
    <location>
        <position position="442"/>
    </location>
</feature>
<comment type="function">
    <text evidence="1">May be involved in the metabolism of insect hormones and in the breakdown of synthetic insecticides.</text>
</comment>
<comment type="cofactor">
    <cofactor evidence="1">
        <name>heme</name>
        <dbReference type="ChEBI" id="CHEBI:30413"/>
    </cofactor>
</comment>
<comment type="subcellular location">
    <subcellularLocation>
        <location evidence="2">Endoplasmic reticulum membrane</location>
        <topology evidence="2">Peripheral membrane protein</topology>
    </subcellularLocation>
    <subcellularLocation>
        <location evidence="2">Microsome membrane</location>
        <topology evidence="2">Peripheral membrane protein</topology>
    </subcellularLocation>
</comment>
<comment type="miscellaneous">
    <text>More highly expressed in DDT-susceptible strains (Canton-S and 91-C) as compared to the DDT-resistant strains (91-R and Wisconsin).</text>
</comment>
<comment type="similarity">
    <text evidence="2">Belongs to the cytochrome P450 family.</text>
</comment>
<evidence type="ECO:0000250" key="1"/>
<evidence type="ECO:0000305" key="2"/>
<name>CP6G2_DROME</name>
<keyword id="KW-0256">Endoplasmic reticulum</keyword>
<keyword id="KW-0349">Heme</keyword>
<keyword id="KW-0408">Iron</keyword>
<keyword id="KW-0472">Membrane</keyword>
<keyword id="KW-0479">Metal-binding</keyword>
<keyword id="KW-0492">Microsome</keyword>
<keyword id="KW-0503">Monooxygenase</keyword>
<keyword id="KW-0560">Oxidoreductase</keyword>
<keyword id="KW-1185">Reference proteome</keyword>
<gene>
    <name type="primary">Cyp6g2</name>
    <name type="ORF">CG8859</name>
</gene>
<sequence length="519" mass="59608">MELVLLILVASLIGIAFLALQQHYSYWRRMGVREIRPKWIVGNLMGLLNMRMSPAEFISQLYNHPDAENEPFVGIHVFHKPALLLRDPEMVRNILVKDFAGFSNRYSSSDPKGDPLGSQNIFFLKNPAWKEVRLKLSPFFTGNRLKQMFPLIEEVGASLDAHLRQQPLHNERMRCFDLEAKELCALYTTDVIATVAYGVSANSFTDPKCEFRRHGRSVFEFNLLRAAEFTLVFFLPHLVPFVRFKVVPAEATRFLRKTINYVMSEREKSGQKRNDLIDILIEFRRSTQLAKASGIKDQFVFEGDILVAQAVLFFTAGFESSSSTMAFAMYELAKDTDVQQRLREEIKDALVESGGQVTLKMIESLEFMQMILLEVLRMYPPLPFLDRECTSGRDYSLAPFHKKFVVPKGMPVYIPCYALHMDPQYFPQPRKFLPERFSPENRKLHTPYTYMPFGLGPHGCIGERFGYLQAKVGLVNLLRNHMITTSERTPHRMQLDPKAIITQAKGGIHLRLVRDALGV</sequence>
<proteinExistence type="evidence at transcript level"/>
<accession>Q9V675</accession>
<accession>A8WHF1</accession>
<accession>Q6SEI3</accession>
<organism>
    <name type="scientific">Drosophila melanogaster</name>
    <name type="common">Fruit fly</name>
    <dbReference type="NCBI Taxonomy" id="7227"/>
    <lineage>
        <taxon>Eukaryota</taxon>
        <taxon>Metazoa</taxon>
        <taxon>Ecdysozoa</taxon>
        <taxon>Arthropoda</taxon>
        <taxon>Hexapoda</taxon>
        <taxon>Insecta</taxon>
        <taxon>Pterygota</taxon>
        <taxon>Neoptera</taxon>
        <taxon>Endopterygota</taxon>
        <taxon>Diptera</taxon>
        <taxon>Brachycera</taxon>
        <taxon>Muscomorpha</taxon>
        <taxon>Ephydroidea</taxon>
        <taxon>Drosophilidae</taxon>
        <taxon>Drosophila</taxon>
        <taxon>Sophophora</taxon>
    </lineage>
</organism>
<dbReference type="EC" id="1.14.-.-"/>
<dbReference type="EMBL" id="AY459353">
    <property type="protein sequence ID" value="AAR88134.1"/>
    <property type="molecule type" value="mRNA"/>
</dbReference>
<dbReference type="EMBL" id="AE013599">
    <property type="protein sequence ID" value="AAF58556.1"/>
    <property type="molecule type" value="Genomic_DNA"/>
</dbReference>
<dbReference type="EMBL" id="BT031097">
    <property type="protein sequence ID" value="ABX00719.1"/>
    <property type="molecule type" value="mRNA"/>
</dbReference>
<dbReference type="RefSeq" id="NP_610744.1">
    <property type="nucleotide sequence ID" value="NM_136900.2"/>
</dbReference>
<dbReference type="SMR" id="Q9V675"/>
<dbReference type="BioGRID" id="62095">
    <property type="interactions" value="1"/>
</dbReference>
<dbReference type="DIP" id="DIP-19705N"/>
<dbReference type="FunCoup" id="Q9V675">
    <property type="interactions" value="13"/>
</dbReference>
<dbReference type="IntAct" id="Q9V675">
    <property type="interactions" value="1"/>
</dbReference>
<dbReference type="STRING" id="7227.FBpp0087117"/>
<dbReference type="PaxDb" id="7227-FBpp0087117"/>
<dbReference type="DNASU" id="36317"/>
<dbReference type="EnsemblMetazoa" id="FBtr0088009">
    <property type="protein sequence ID" value="FBpp0087117"/>
    <property type="gene ID" value="FBgn0033696"/>
</dbReference>
<dbReference type="GeneID" id="36317"/>
<dbReference type="KEGG" id="dme:Dmel_CG8859"/>
<dbReference type="UCSC" id="CG8859-RA">
    <property type="organism name" value="d. melanogaster"/>
</dbReference>
<dbReference type="AGR" id="FB:FBgn0033696"/>
<dbReference type="CTD" id="36317"/>
<dbReference type="FlyBase" id="FBgn0033696">
    <property type="gene designation" value="Cyp6g2"/>
</dbReference>
<dbReference type="VEuPathDB" id="VectorBase:FBgn0033696"/>
<dbReference type="eggNOG" id="KOG0158">
    <property type="taxonomic scope" value="Eukaryota"/>
</dbReference>
<dbReference type="GeneTree" id="ENSGT00940000167661"/>
<dbReference type="HOGENOM" id="CLU_001570_5_2_1"/>
<dbReference type="InParanoid" id="Q9V675"/>
<dbReference type="OMA" id="SLEYMQM"/>
<dbReference type="OrthoDB" id="2789670at2759"/>
<dbReference type="PhylomeDB" id="Q9V675"/>
<dbReference type="BioGRID-ORCS" id="36317">
    <property type="hits" value="0 hits in 1 CRISPR screen"/>
</dbReference>
<dbReference type="GenomeRNAi" id="36317"/>
<dbReference type="PRO" id="PR:Q9V675"/>
<dbReference type="Proteomes" id="UP000000803">
    <property type="component" value="Chromosome 2R"/>
</dbReference>
<dbReference type="Bgee" id="FBgn0033696">
    <property type="expression patterns" value="Expressed in embryonic/larval corpus allatum (Drosophila) and 4 other cell types or tissues"/>
</dbReference>
<dbReference type="GO" id="GO:0005789">
    <property type="term" value="C:endoplasmic reticulum membrane"/>
    <property type="evidence" value="ECO:0007669"/>
    <property type="project" value="UniProtKB-SubCell"/>
</dbReference>
<dbReference type="GO" id="GO:0120512">
    <property type="term" value="F:farnesoate epoxidase activity"/>
    <property type="evidence" value="ECO:0000314"/>
    <property type="project" value="FlyBase"/>
</dbReference>
<dbReference type="GO" id="GO:0020037">
    <property type="term" value="F:heme binding"/>
    <property type="evidence" value="ECO:0007669"/>
    <property type="project" value="InterPro"/>
</dbReference>
<dbReference type="GO" id="GO:0005506">
    <property type="term" value="F:iron ion binding"/>
    <property type="evidence" value="ECO:0007669"/>
    <property type="project" value="InterPro"/>
</dbReference>
<dbReference type="GO" id="GO:0120511">
    <property type="term" value="F:methyl farnesoate epoxidase activity"/>
    <property type="evidence" value="ECO:0000314"/>
    <property type="project" value="FlyBase"/>
</dbReference>
<dbReference type="GO" id="GO:0046701">
    <property type="term" value="P:insecticide catabolic process"/>
    <property type="evidence" value="ECO:0000318"/>
    <property type="project" value="GO_Central"/>
</dbReference>
<dbReference type="GO" id="GO:0046680">
    <property type="term" value="P:response to DDT"/>
    <property type="evidence" value="ECO:0000318"/>
    <property type="project" value="GO_Central"/>
</dbReference>
<dbReference type="GO" id="GO:0017085">
    <property type="term" value="P:response to insecticide"/>
    <property type="evidence" value="ECO:0000315"/>
    <property type="project" value="FlyBase"/>
</dbReference>
<dbReference type="CDD" id="cd11056">
    <property type="entry name" value="CYP6-like"/>
    <property type="match status" value="1"/>
</dbReference>
<dbReference type="FunFam" id="1.10.630.10:FF:000042">
    <property type="entry name" value="Cytochrome P450"/>
    <property type="match status" value="1"/>
</dbReference>
<dbReference type="Gene3D" id="1.10.630.10">
    <property type="entry name" value="Cytochrome P450"/>
    <property type="match status" value="1"/>
</dbReference>
<dbReference type="InterPro" id="IPR001128">
    <property type="entry name" value="Cyt_P450"/>
</dbReference>
<dbReference type="InterPro" id="IPR017972">
    <property type="entry name" value="Cyt_P450_CS"/>
</dbReference>
<dbReference type="InterPro" id="IPR002403">
    <property type="entry name" value="Cyt_P450_E_grp-IV"/>
</dbReference>
<dbReference type="InterPro" id="IPR036396">
    <property type="entry name" value="Cyt_P450_sf"/>
</dbReference>
<dbReference type="InterPro" id="IPR050476">
    <property type="entry name" value="Insect_CytP450_Detox"/>
</dbReference>
<dbReference type="PANTHER" id="PTHR24292">
    <property type="entry name" value="CYTOCHROME P450"/>
    <property type="match status" value="1"/>
</dbReference>
<dbReference type="PANTHER" id="PTHR24292:SF45">
    <property type="entry name" value="CYTOCHROME P450 6G1-RELATED"/>
    <property type="match status" value="1"/>
</dbReference>
<dbReference type="Pfam" id="PF00067">
    <property type="entry name" value="p450"/>
    <property type="match status" value="1"/>
</dbReference>
<dbReference type="PRINTS" id="PR00465">
    <property type="entry name" value="EP450IV"/>
</dbReference>
<dbReference type="PRINTS" id="PR00385">
    <property type="entry name" value="P450"/>
</dbReference>
<dbReference type="SUPFAM" id="SSF48264">
    <property type="entry name" value="Cytochrome P450"/>
    <property type="match status" value="1"/>
</dbReference>
<dbReference type="PROSITE" id="PS00086">
    <property type="entry name" value="CYTOCHROME_P450"/>
    <property type="match status" value="1"/>
</dbReference>
<reference key="1">
    <citation type="journal article" date="2005" name="Insect Mol. Biol.">
        <title>Expression of Cyp6g1 and Cyp12d1 in DDT resistant and susceptible strains of Drosophila melanogaster.</title>
        <authorList>
            <person name="Festucci-Buselli R.A."/>
            <person name="Carvalho-Dias A.S."/>
            <person name="de Oliveira-Andrade M."/>
            <person name="Caixeta-Nunes C."/>
            <person name="Li H.-M."/>
            <person name="Stuart J.J."/>
            <person name="Muir W."/>
            <person name="Scharf M.E."/>
            <person name="Pittendrigh B.R."/>
        </authorList>
    </citation>
    <scope>NUCLEOTIDE SEQUENCE [MRNA]</scope>
</reference>
<reference key="2">
    <citation type="journal article" date="2000" name="Science">
        <title>The genome sequence of Drosophila melanogaster.</title>
        <authorList>
            <person name="Adams M.D."/>
            <person name="Celniker S.E."/>
            <person name="Holt R.A."/>
            <person name="Evans C.A."/>
            <person name="Gocayne J.D."/>
            <person name="Amanatides P.G."/>
            <person name="Scherer S.E."/>
            <person name="Li P.W."/>
            <person name="Hoskins R.A."/>
            <person name="Galle R.F."/>
            <person name="George R.A."/>
            <person name="Lewis S.E."/>
            <person name="Richards S."/>
            <person name="Ashburner M."/>
            <person name="Henderson S.N."/>
            <person name="Sutton G.G."/>
            <person name="Wortman J.R."/>
            <person name="Yandell M.D."/>
            <person name="Zhang Q."/>
            <person name="Chen L.X."/>
            <person name="Brandon R.C."/>
            <person name="Rogers Y.-H.C."/>
            <person name="Blazej R.G."/>
            <person name="Champe M."/>
            <person name="Pfeiffer B.D."/>
            <person name="Wan K.H."/>
            <person name="Doyle C."/>
            <person name="Baxter E.G."/>
            <person name="Helt G."/>
            <person name="Nelson C.R."/>
            <person name="Miklos G.L.G."/>
            <person name="Abril J.F."/>
            <person name="Agbayani A."/>
            <person name="An H.-J."/>
            <person name="Andrews-Pfannkoch C."/>
            <person name="Baldwin D."/>
            <person name="Ballew R.M."/>
            <person name="Basu A."/>
            <person name="Baxendale J."/>
            <person name="Bayraktaroglu L."/>
            <person name="Beasley E.M."/>
            <person name="Beeson K.Y."/>
            <person name="Benos P.V."/>
            <person name="Berman B.P."/>
            <person name="Bhandari D."/>
            <person name="Bolshakov S."/>
            <person name="Borkova D."/>
            <person name="Botchan M.R."/>
            <person name="Bouck J."/>
            <person name="Brokstein P."/>
            <person name="Brottier P."/>
            <person name="Burtis K.C."/>
            <person name="Busam D.A."/>
            <person name="Butler H."/>
            <person name="Cadieu E."/>
            <person name="Center A."/>
            <person name="Chandra I."/>
            <person name="Cherry J.M."/>
            <person name="Cawley S."/>
            <person name="Dahlke C."/>
            <person name="Davenport L.B."/>
            <person name="Davies P."/>
            <person name="de Pablos B."/>
            <person name="Delcher A."/>
            <person name="Deng Z."/>
            <person name="Mays A.D."/>
            <person name="Dew I."/>
            <person name="Dietz S.M."/>
            <person name="Dodson K."/>
            <person name="Doup L.E."/>
            <person name="Downes M."/>
            <person name="Dugan-Rocha S."/>
            <person name="Dunkov B.C."/>
            <person name="Dunn P."/>
            <person name="Durbin K.J."/>
            <person name="Evangelista C.C."/>
            <person name="Ferraz C."/>
            <person name="Ferriera S."/>
            <person name="Fleischmann W."/>
            <person name="Fosler C."/>
            <person name="Gabrielian A.E."/>
            <person name="Garg N.S."/>
            <person name="Gelbart W.M."/>
            <person name="Glasser K."/>
            <person name="Glodek A."/>
            <person name="Gong F."/>
            <person name="Gorrell J.H."/>
            <person name="Gu Z."/>
            <person name="Guan P."/>
            <person name="Harris M."/>
            <person name="Harris N.L."/>
            <person name="Harvey D.A."/>
            <person name="Heiman T.J."/>
            <person name="Hernandez J.R."/>
            <person name="Houck J."/>
            <person name="Hostin D."/>
            <person name="Houston K.A."/>
            <person name="Howland T.J."/>
            <person name="Wei M.-H."/>
            <person name="Ibegwam C."/>
            <person name="Jalali M."/>
            <person name="Kalush F."/>
            <person name="Karpen G.H."/>
            <person name="Ke Z."/>
            <person name="Kennison J.A."/>
            <person name="Ketchum K.A."/>
            <person name="Kimmel B.E."/>
            <person name="Kodira C.D."/>
            <person name="Kraft C.L."/>
            <person name="Kravitz S."/>
            <person name="Kulp D."/>
            <person name="Lai Z."/>
            <person name="Lasko P."/>
            <person name="Lei Y."/>
            <person name="Levitsky A.A."/>
            <person name="Li J.H."/>
            <person name="Li Z."/>
            <person name="Liang Y."/>
            <person name="Lin X."/>
            <person name="Liu X."/>
            <person name="Mattei B."/>
            <person name="McIntosh T.C."/>
            <person name="McLeod M.P."/>
            <person name="McPherson D."/>
            <person name="Merkulov G."/>
            <person name="Milshina N.V."/>
            <person name="Mobarry C."/>
            <person name="Morris J."/>
            <person name="Moshrefi A."/>
            <person name="Mount S.M."/>
            <person name="Moy M."/>
            <person name="Murphy B."/>
            <person name="Murphy L."/>
            <person name="Muzny D.M."/>
            <person name="Nelson D.L."/>
            <person name="Nelson D.R."/>
            <person name="Nelson K.A."/>
            <person name="Nixon K."/>
            <person name="Nusskern D.R."/>
            <person name="Pacleb J.M."/>
            <person name="Palazzolo M."/>
            <person name="Pittman G.S."/>
            <person name="Pan S."/>
            <person name="Pollard J."/>
            <person name="Puri V."/>
            <person name="Reese M.G."/>
            <person name="Reinert K."/>
            <person name="Remington K."/>
            <person name="Saunders R.D.C."/>
            <person name="Scheeler F."/>
            <person name="Shen H."/>
            <person name="Shue B.C."/>
            <person name="Siden-Kiamos I."/>
            <person name="Simpson M."/>
            <person name="Skupski M.P."/>
            <person name="Smith T.J."/>
            <person name="Spier E."/>
            <person name="Spradling A.C."/>
            <person name="Stapleton M."/>
            <person name="Strong R."/>
            <person name="Sun E."/>
            <person name="Svirskas R."/>
            <person name="Tector C."/>
            <person name="Turner R."/>
            <person name="Venter E."/>
            <person name="Wang A.H."/>
            <person name="Wang X."/>
            <person name="Wang Z.-Y."/>
            <person name="Wassarman D.A."/>
            <person name="Weinstock G.M."/>
            <person name="Weissenbach J."/>
            <person name="Williams S.M."/>
            <person name="Woodage T."/>
            <person name="Worley K.C."/>
            <person name="Wu D."/>
            <person name="Yang S."/>
            <person name="Yao Q.A."/>
            <person name="Ye J."/>
            <person name="Yeh R.-F."/>
            <person name="Zaveri J.S."/>
            <person name="Zhan M."/>
            <person name="Zhang G."/>
            <person name="Zhao Q."/>
            <person name="Zheng L."/>
            <person name="Zheng X.H."/>
            <person name="Zhong F.N."/>
            <person name="Zhong W."/>
            <person name="Zhou X."/>
            <person name="Zhu S.C."/>
            <person name="Zhu X."/>
            <person name="Smith H.O."/>
            <person name="Gibbs R.A."/>
            <person name="Myers E.W."/>
            <person name="Rubin G.M."/>
            <person name="Venter J.C."/>
        </authorList>
    </citation>
    <scope>NUCLEOTIDE SEQUENCE [LARGE SCALE GENOMIC DNA]</scope>
    <source>
        <strain>Berkeley</strain>
    </source>
</reference>
<reference key="3">
    <citation type="journal article" date="2002" name="Genome Biol.">
        <title>Annotation of the Drosophila melanogaster euchromatic genome: a systematic review.</title>
        <authorList>
            <person name="Misra S."/>
            <person name="Crosby M.A."/>
            <person name="Mungall C.J."/>
            <person name="Matthews B.B."/>
            <person name="Campbell K.S."/>
            <person name="Hradecky P."/>
            <person name="Huang Y."/>
            <person name="Kaminker J.S."/>
            <person name="Millburn G.H."/>
            <person name="Prochnik S.E."/>
            <person name="Smith C.D."/>
            <person name="Tupy J.L."/>
            <person name="Whitfield E.J."/>
            <person name="Bayraktaroglu L."/>
            <person name="Berman B.P."/>
            <person name="Bettencourt B.R."/>
            <person name="Celniker S.E."/>
            <person name="de Grey A.D.N.J."/>
            <person name="Drysdale R.A."/>
            <person name="Harris N.L."/>
            <person name="Richter J."/>
            <person name="Russo S."/>
            <person name="Schroeder A.J."/>
            <person name="Shu S.Q."/>
            <person name="Stapleton M."/>
            <person name="Yamada C."/>
            <person name="Ashburner M."/>
            <person name="Gelbart W.M."/>
            <person name="Rubin G.M."/>
            <person name="Lewis S.E."/>
        </authorList>
    </citation>
    <scope>GENOME REANNOTATION</scope>
    <source>
        <strain>Berkeley</strain>
    </source>
</reference>
<reference key="4">
    <citation type="submission" date="2007-11" db="EMBL/GenBank/DDBJ databases">
        <authorList>
            <person name="Stapleton M."/>
            <person name="Carlson J.W."/>
            <person name="Frise E."/>
            <person name="Kapadia B."/>
            <person name="Park S."/>
            <person name="Wan K.H."/>
            <person name="Yu C."/>
            <person name="Celniker S.E."/>
        </authorList>
    </citation>
    <scope>NUCLEOTIDE SEQUENCE [LARGE SCALE MRNA]</scope>
    <source>
        <strain>Berkeley</strain>
    </source>
</reference>